<dbReference type="EC" id="2.7.13.3"/>
<dbReference type="EMBL" id="BA000033">
    <property type="protein sequence ID" value="BAB94064.1"/>
    <property type="molecule type" value="Genomic_DNA"/>
</dbReference>
<dbReference type="RefSeq" id="WP_000127997.1">
    <property type="nucleotide sequence ID" value="NC_003923.1"/>
</dbReference>
<dbReference type="SMR" id="Q8NYJ8"/>
<dbReference type="KEGG" id="sam:MW0199"/>
<dbReference type="HOGENOM" id="CLU_525720_0_0_9"/>
<dbReference type="GO" id="GO:0005886">
    <property type="term" value="C:plasma membrane"/>
    <property type="evidence" value="ECO:0007669"/>
    <property type="project" value="UniProtKB-SubCell"/>
</dbReference>
<dbReference type="GO" id="GO:0005524">
    <property type="term" value="F:ATP binding"/>
    <property type="evidence" value="ECO:0007669"/>
    <property type="project" value="UniProtKB-KW"/>
</dbReference>
<dbReference type="GO" id="GO:0000155">
    <property type="term" value="F:phosphorelay sensor kinase activity"/>
    <property type="evidence" value="ECO:0007669"/>
    <property type="project" value="InterPro"/>
</dbReference>
<dbReference type="Gene3D" id="3.30.565.10">
    <property type="entry name" value="Histidine kinase-like ATPase, C-terminal domain"/>
    <property type="match status" value="1"/>
</dbReference>
<dbReference type="InterPro" id="IPR050640">
    <property type="entry name" value="Bact_2-comp_sensor_kinase"/>
</dbReference>
<dbReference type="InterPro" id="IPR036890">
    <property type="entry name" value="HATPase_C_sf"/>
</dbReference>
<dbReference type="InterPro" id="IPR010559">
    <property type="entry name" value="Sig_transdc_His_kin_internal"/>
</dbReference>
<dbReference type="PANTHER" id="PTHR34220">
    <property type="entry name" value="SENSOR HISTIDINE KINASE YPDA"/>
    <property type="match status" value="1"/>
</dbReference>
<dbReference type="PANTHER" id="PTHR34220:SF11">
    <property type="entry name" value="SENSOR PROTEIN KINASE HPTS"/>
    <property type="match status" value="1"/>
</dbReference>
<dbReference type="Pfam" id="PF02518">
    <property type="entry name" value="HATPase_c"/>
    <property type="match status" value="1"/>
</dbReference>
<dbReference type="Pfam" id="PF06580">
    <property type="entry name" value="His_kinase"/>
    <property type="match status" value="1"/>
</dbReference>
<dbReference type="SUPFAM" id="SSF55874">
    <property type="entry name" value="ATPase domain of HSP90 chaperone/DNA topoisomerase II/histidine kinase"/>
    <property type="match status" value="1"/>
</dbReference>
<accession>Q8NYJ8</accession>
<comment type="function">
    <text evidence="2">Member of the two-component regulatory system HptS/HptR that regulates genes involved in hexose phosphate transport system in response to changes in extracellular phosphate sources. May act as a sensor protein kinase which is autophosphorylated at a histidine residue and transfers its phosphate group to the conserved aspartic acid residue in the regulatory domain of HptS. In turn, HptS antagonizes CcpA-dependent transcription of a subset of CcpA-regulated genes involved in antibiotic susceptibility.</text>
</comment>
<comment type="catalytic activity">
    <reaction>
        <text>ATP + protein L-histidine = ADP + protein N-phospho-L-histidine.</text>
        <dbReference type="EC" id="2.7.13.3"/>
    </reaction>
</comment>
<comment type="subcellular location">
    <subcellularLocation>
        <location evidence="4">Cell membrane</location>
        <topology evidence="4">Multi-pass membrane protein</topology>
    </subcellularLocation>
</comment>
<comment type="PTM">
    <text evidence="1">Autophosphorylated.</text>
</comment>
<name>HPTS_STAAW</name>
<evidence type="ECO:0000250" key="1"/>
<evidence type="ECO:0000250" key="2">
    <source>
        <dbReference type="UniProtKB" id="Q2G1E0"/>
    </source>
</evidence>
<evidence type="ECO:0000255" key="3"/>
<evidence type="ECO:0000305" key="4"/>
<protein>
    <recommendedName>
        <fullName>Sensor protein kinase HptS</fullName>
        <ecNumber>2.7.13.3</ecNumber>
    </recommendedName>
</protein>
<reference key="1">
    <citation type="journal article" date="2002" name="Lancet">
        <title>Genome and virulence determinants of high virulence community-acquired MRSA.</title>
        <authorList>
            <person name="Baba T."/>
            <person name="Takeuchi F."/>
            <person name="Kuroda M."/>
            <person name="Yuzawa H."/>
            <person name="Aoki K."/>
            <person name="Oguchi A."/>
            <person name="Nagai Y."/>
            <person name="Iwama N."/>
            <person name="Asano K."/>
            <person name="Naimi T."/>
            <person name="Kuroda H."/>
            <person name="Cui L."/>
            <person name="Yamamoto K."/>
            <person name="Hiramatsu K."/>
        </authorList>
    </citation>
    <scope>NUCLEOTIDE SEQUENCE [LARGE SCALE GENOMIC DNA]</scope>
    <source>
        <strain>MW2</strain>
    </source>
</reference>
<organism>
    <name type="scientific">Staphylococcus aureus (strain MW2)</name>
    <dbReference type="NCBI Taxonomy" id="196620"/>
    <lineage>
        <taxon>Bacteria</taxon>
        <taxon>Bacillati</taxon>
        <taxon>Bacillota</taxon>
        <taxon>Bacilli</taxon>
        <taxon>Bacillales</taxon>
        <taxon>Staphylococcaceae</taxon>
        <taxon>Staphylococcus</taxon>
    </lineage>
</organism>
<proteinExistence type="inferred from homology"/>
<feature type="chain" id="PRO_0000299124" description="Sensor protein kinase HptS">
    <location>
        <begin position="1"/>
        <end position="518"/>
    </location>
</feature>
<feature type="transmembrane region" description="Helical" evidence="3">
    <location>
        <begin position="20"/>
        <end position="40"/>
    </location>
</feature>
<feature type="transmembrane region" description="Helical" evidence="3">
    <location>
        <begin position="222"/>
        <end position="242"/>
    </location>
</feature>
<feature type="domain" description="Histidine kinase">
    <location>
        <begin position="297"/>
        <end position="513"/>
    </location>
</feature>
<feature type="modified residue" description="Phosphohistidine; by autocatalysis" evidence="1">
    <location>
        <position position="325"/>
    </location>
</feature>
<sequence>MTAYKPYRHQLRRSLFASTIFPVFLVIIIGLVSFYAIYIWIEHRTIHQHVDESQSSLHHTEKQIQTFITQHNNSFQELDLTNHHDVTATKRGLLKLIHQQPATLYYELSGPNQFITNNYEHLNTKNMYLFSTHQLKFKNSTYMLKIYMANTPRLSEIKKDSRQFALIVDQYDNILYANDDRFTIGEKYRPQQFGFMNESVKLNHADHRLIIYKDIHENIEDGITLLIVMAVVLVLLVIFGFISADNMAKRQTKDIETIIQKIYYAKNRHLGTYTPLKNNSELEEINNYIYDLFESNEQLIHSIEHTERRLRDIQLKEIERQFQPHFLFNTMQTIQYLITLSPKLAQTVVQQLSQMLRYSLRTNSHTVELNEELNYIEQYVAIQNIRFDDMIKLHIESSEEARHQTIGKMMLQPLIENAIKHGRDTESLDITIRLTLARQNLHVLVCDNGIGMSSSRLQYVRQSLNNDVFDTKHLGLNHLHNKAMIQYGSHARLHIFSKRNQGTLICYKIPLSRGNVDV</sequence>
<gene>
    <name type="primary">hptS</name>
    <name type="ordered locus">MW0199</name>
</gene>
<keyword id="KW-0067">ATP-binding</keyword>
<keyword id="KW-1003">Cell membrane</keyword>
<keyword id="KW-0418">Kinase</keyword>
<keyword id="KW-0472">Membrane</keyword>
<keyword id="KW-0547">Nucleotide-binding</keyword>
<keyword id="KW-0597">Phosphoprotein</keyword>
<keyword id="KW-0808">Transferase</keyword>
<keyword id="KW-0812">Transmembrane</keyword>
<keyword id="KW-1133">Transmembrane helix</keyword>
<keyword id="KW-0902">Two-component regulatory system</keyword>